<protein>
    <recommendedName>
        <fullName evidence="1">Large ribosomal subunit protein uL18</fullName>
    </recommendedName>
    <alternativeName>
        <fullName evidence="2">50S ribosomal protein L18</fullName>
    </alternativeName>
</protein>
<organism>
    <name type="scientific">Pseudothermotoga lettingae (strain ATCC BAA-301 / DSM 14385 / NBRC 107922 / TMO)</name>
    <name type="common">Thermotoga lettingae</name>
    <dbReference type="NCBI Taxonomy" id="416591"/>
    <lineage>
        <taxon>Bacteria</taxon>
        <taxon>Thermotogati</taxon>
        <taxon>Thermotogota</taxon>
        <taxon>Thermotogae</taxon>
        <taxon>Thermotogales</taxon>
        <taxon>Thermotogaceae</taxon>
        <taxon>Pseudothermotoga</taxon>
    </lineage>
</organism>
<keyword id="KW-1185">Reference proteome</keyword>
<keyword id="KW-0687">Ribonucleoprotein</keyword>
<keyword id="KW-0689">Ribosomal protein</keyword>
<keyword id="KW-0694">RNA-binding</keyword>
<keyword id="KW-0699">rRNA-binding</keyword>
<sequence length="122" mass="13977">MIKKEDRKFKRIKRHLRIRKKVFGTSERPRLSVFRSEKHIYAQIIDDTKGHTLVSASTLDPDLRARIAKTYNKEAAKEVGKLVAQKALSKGISQVVFDRGGFKFHGRIRELADAAREAGLKF</sequence>
<comment type="function">
    <text evidence="1">This is one of the proteins that bind and probably mediate the attachment of the 5S RNA into the large ribosomal subunit, where it forms part of the central protuberance.</text>
</comment>
<comment type="subunit">
    <text evidence="1">Part of the 50S ribosomal subunit; part of the 5S rRNA/L5/L18/L25 subcomplex. Contacts the 5S and 23S rRNAs.</text>
</comment>
<comment type="similarity">
    <text evidence="1">Belongs to the universal ribosomal protein uL18 family.</text>
</comment>
<name>RL18_PSELT</name>
<reference key="1">
    <citation type="submission" date="2007-08" db="EMBL/GenBank/DDBJ databases">
        <title>Complete sequence of Thermotoga lettingae TMO.</title>
        <authorList>
            <consortium name="US DOE Joint Genome Institute"/>
            <person name="Copeland A."/>
            <person name="Lucas S."/>
            <person name="Lapidus A."/>
            <person name="Barry K."/>
            <person name="Glavina del Rio T."/>
            <person name="Dalin E."/>
            <person name="Tice H."/>
            <person name="Pitluck S."/>
            <person name="Foster B."/>
            <person name="Bruce D."/>
            <person name="Schmutz J."/>
            <person name="Larimer F."/>
            <person name="Land M."/>
            <person name="Hauser L."/>
            <person name="Kyrpides N."/>
            <person name="Mikhailova N."/>
            <person name="Nelson K."/>
            <person name="Gogarten J.P."/>
            <person name="Noll K."/>
            <person name="Richardson P."/>
        </authorList>
    </citation>
    <scope>NUCLEOTIDE SEQUENCE [LARGE SCALE GENOMIC DNA]</scope>
    <source>
        <strain>ATCC BAA-301 / DSM 14385 / NBRC 107922 / TMO</strain>
    </source>
</reference>
<dbReference type="EMBL" id="CP000812">
    <property type="protein sequence ID" value="ABV33161.1"/>
    <property type="molecule type" value="Genomic_DNA"/>
</dbReference>
<dbReference type="RefSeq" id="WP_012002642.1">
    <property type="nucleotide sequence ID" value="NZ_BSDV01000001.1"/>
</dbReference>
<dbReference type="SMR" id="A8F4S7"/>
<dbReference type="STRING" id="416591.Tlet_0595"/>
<dbReference type="KEGG" id="tle:Tlet_0595"/>
<dbReference type="eggNOG" id="COG0256">
    <property type="taxonomic scope" value="Bacteria"/>
</dbReference>
<dbReference type="HOGENOM" id="CLU_098841_0_1_0"/>
<dbReference type="OrthoDB" id="9810939at2"/>
<dbReference type="Proteomes" id="UP000002016">
    <property type="component" value="Chromosome"/>
</dbReference>
<dbReference type="GO" id="GO:0022625">
    <property type="term" value="C:cytosolic large ribosomal subunit"/>
    <property type="evidence" value="ECO:0007669"/>
    <property type="project" value="TreeGrafter"/>
</dbReference>
<dbReference type="GO" id="GO:0008097">
    <property type="term" value="F:5S rRNA binding"/>
    <property type="evidence" value="ECO:0007669"/>
    <property type="project" value="TreeGrafter"/>
</dbReference>
<dbReference type="GO" id="GO:0003735">
    <property type="term" value="F:structural constituent of ribosome"/>
    <property type="evidence" value="ECO:0007669"/>
    <property type="project" value="InterPro"/>
</dbReference>
<dbReference type="GO" id="GO:0006412">
    <property type="term" value="P:translation"/>
    <property type="evidence" value="ECO:0007669"/>
    <property type="project" value="UniProtKB-UniRule"/>
</dbReference>
<dbReference type="CDD" id="cd00432">
    <property type="entry name" value="Ribosomal_L18_L5e"/>
    <property type="match status" value="1"/>
</dbReference>
<dbReference type="FunFam" id="3.30.420.100:FF:000001">
    <property type="entry name" value="50S ribosomal protein L18"/>
    <property type="match status" value="1"/>
</dbReference>
<dbReference type="Gene3D" id="3.30.420.100">
    <property type="match status" value="1"/>
</dbReference>
<dbReference type="HAMAP" id="MF_01337_B">
    <property type="entry name" value="Ribosomal_uL18_B"/>
    <property type="match status" value="1"/>
</dbReference>
<dbReference type="InterPro" id="IPR004389">
    <property type="entry name" value="Ribosomal_uL18_bac-type"/>
</dbReference>
<dbReference type="InterPro" id="IPR005484">
    <property type="entry name" value="Ribosomal_uL18_bac/euk"/>
</dbReference>
<dbReference type="NCBIfam" id="TIGR00060">
    <property type="entry name" value="L18_bact"/>
    <property type="match status" value="1"/>
</dbReference>
<dbReference type="PANTHER" id="PTHR12899">
    <property type="entry name" value="39S RIBOSOMAL PROTEIN L18, MITOCHONDRIAL"/>
    <property type="match status" value="1"/>
</dbReference>
<dbReference type="PANTHER" id="PTHR12899:SF3">
    <property type="entry name" value="LARGE RIBOSOMAL SUBUNIT PROTEIN UL18M"/>
    <property type="match status" value="1"/>
</dbReference>
<dbReference type="Pfam" id="PF00861">
    <property type="entry name" value="Ribosomal_L18p"/>
    <property type="match status" value="1"/>
</dbReference>
<dbReference type="SUPFAM" id="SSF53137">
    <property type="entry name" value="Translational machinery components"/>
    <property type="match status" value="1"/>
</dbReference>
<feature type="chain" id="PRO_1000067645" description="Large ribosomal subunit protein uL18">
    <location>
        <begin position="1"/>
        <end position="122"/>
    </location>
</feature>
<accession>A8F4S7</accession>
<gene>
    <name evidence="1" type="primary">rplR</name>
    <name type="ordered locus">Tlet_0595</name>
</gene>
<proteinExistence type="inferred from homology"/>
<evidence type="ECO:0000255" key="1">
    <source>
        <dbReference type="HAMAP-Rule" id="MF_01337"/>
    </source>
</evidence>
<evidence type="ECO:0000305" key="2"/>